<comment type="catalytic activity">
    <reaction evidence="1">
        <text>(2R)-3-phosphoglycerate + ATP = (2R)-3-phospho-glyceroyl phosphate + ADP</text>
        <dbReference type="Rhea" id="RHEA:14801"/>
        <dbReference type="ChEBI" id="CHEBI:30616"/>
        <dbReference type="ChEBI" id="CHEBI:57604"/>
        <dbReference type="ChEBI" id="CHEBI:58272"/>
        <dbReference type="ChEBI" id="CHEBI:456216"/>
        <dbReference type="EC" id="2.7.2.3"/>
    </reaction>
</comment>
<comment type="pathway">
    <text evidence="1">Carbohydrate degradation; glycolysis; pyruvate from D-glyceraldehyde 3-phosphate: step 2/5.</text>
</comment>
<comment type="subunit">
    <text evidence="1">Monomer.</text>
</comment>
<comment type="subcellular location">
    <subcellularLocation>
        <location evidence="1">Cytoplasm</location>
    </subcellularLocation>
</comment>
<comment type="similarity">
    <text evidence="1">Belongs to the phosphoglycerate kinase family.</text>
</comment>
<reference key="1">
    <citation type="journal article" date="2008" name="Antimicrob. Agents Chemother.">
        <title>Mutated response regulator graR is responsible for phenotypic conversion of Staphylococcus aureus from heterogeneous vancomycin-intermediate resistance to vancomycin-intermediate resistance.</title>
        <authorList>
            <person name="Neoh H.-M."/>
            <person name="Cui L."/>
            <person name="Yuzawa H."/>
            <person name="Takeuchi F."/>
            <person name="Matsuo M."/>
            <person name="Hiramatsu K."/>
        </authorList>
    </citation>
    <scope>NUCLEOTIDE SEQUENCE [LARGE SCALE GENOMIC DNA]</scope>
    <source>
        <strain>Mu3 / ATCC 700698</strain>
    </source>
</reference>
<proteinExistence type="inferred from homology"/>
<gene>
    <name evidence="1" type="primary">pgk</name>
    <name type="ordered locus">SAHV_0770</name>
</gene>
<accession>A7WZS6</accession>
<dbReference type="EC" id="2.7.2.3" evidence="1"/>
<dbReference type="EMBL" id="AP009324">
    <property type="protein sequence ID" value="BAF77653.1"/>
    <property type="molecule type" value="Genomic_DNA"/>
</dbReference>
<dbReference type="RefSeq" id="WP_001074749.1">
    <property type="nucleotide sequence ID" value="NZ_CTYB01000039.1"/>
</dbReference>
<dbReference type="SMR" id="A7WZS6"/>
<dbReference type="KEGG" id="saw:SAHV_0770"/>
<dbReference type="HOGENOM" id="CLU_025427_0_2_9"/>
<dbReference type="UniPathway" id="UPA00109">
    <property type="reaction ID" value="UER00185"/>
</dbReference>
<dbReference type="GO" id="GO:0005829">
    <property type="term" value="C:cytosol"/>
    <property type="evidence" value="ECO:0007669"/>
    <property type="project" value="TreeGrafter"/>
</dbReference>
<dbReference type="GO" id="GO:0043531">
    <property type="term" value="F:ADP binding"/>
    <property type="evidence" value="ECO:0007669"/>
    <property type="project" value="TreeGrafter"/>
</dbReference>
<dbReference type="GO" id="GO:0005524">
    <property type="term" value="F:ATP binding"/>
    <property type="evidence" value="ECO:0007669"/>
    <property type="project" value="UniProtKB-KW"/>
</dbReference>
<dbReference type="GO" id="GO:0004618">
    <property type="term" value="F:phosphoglycerate kinase activity"/>
    <property type="evidence" value="ECO:0007669"/>
    <property type="project" value="UniProtKB-UniRule"/>
</dbReference>
<dbReference type="GO" id="GO:0006094">
    <property type="term" value="P:gluconeogenesis"/>
    <property type="evidence" value="ECO:0007669"/>
    <property type="project" value="TreeGrafter"/>
</dbReference>
<dbReference type="GO" id="GO:0006096">
    <property type="term" value="P:glycolytic process"/>
    <property type="evidence" value="ECO:0007669"/>
    <property type="project" value="UniProtKB-UniRule"/>
</dbReference>
<dbReference type="CDD" id="cd00318">
    <property type="entry name" value="Phosphoglycerate_kinase"/>
    <property type="match status" value="1"/>
</dbReference>
<dbReference type="FunFam" id="3.40.50.1260:FF:000001">
    <property type="entry name" value="Phosphoglycerate kinase"/>
    <property type="match status" value="1"/>
</dbReference>
<dbReference type="FunFam" id="3.40.50.1260:FF:000008">
    <property type="entry name" value="Phosphoglycerate kinase"/>
    <property type="match status" value="1"/>
</dbReference>
<dbReference type="Gene3D" id="3.40.50.1260">
    <property type="entry name" value="Phosphoglycerate kinase, N-terminal domain"/>
    <property type="match status" value="2"/>
</dbReference>
<dbReference type="HAMAP" id="MF_00145">
    <property type="entry name" value="Phosphoglyc_kinase"/>
    <property type="match status" value="1"/>
</dbReference>
<dbReference type="InterPro" id="IPR001576">
    <property type="entry name" value="Phosphoglycerate_kinase"/>
</dbReference>
<dbReference type="InterPro" id="IPR015911">
    <property type="entry name" value="Phosphoglycerate_kinase_CS"/>
</dbReference>
<dbReference type="InterPro" id="IPR015824">
    <property type="entry name" value="Phosphoglycerate_kinase_N"/>
</dbReference>
<dbReference type="InterPro" id="IPR036043">
    <property type="entry name" value="Phosphoglycerate_kinase_sf"/>
</dbReference>
<dbReference type="PANTHER" id="PTHR11406">
    <property type="entry name" value="PHOSPHOGLYCERATE KINASE"/>
    <property type="match status" value="1"/>
</dbReference>
<dbReference type="PANTHER" id="PTHR11406:SF23">
    <property type="entry name" value="PHOSPHOGLYCERATE KINASE 1, CHLOROPLASTIC-RELATED"/>
    <property type="match status" value="1"/>
</dbReference>
<dbReference type="Pfam" id="PF00162">
    <property type="entry name" value="PGK"/>
    <property type="match status" value="1"/>
</dbReference>
<dbReference type="PIRSF" id="PIRSF000724">
    <property type="entry name" value="Pgk"/>
    <property type="match status" value="1"/>
</dbReference>
<dbReference type="PRINTS" id="PR00477">
    <property type="entry name" value="PHGLYCKINASE"/>
</dbReference>
<dbReference type="SUPFAM" id="SSF53748">
    <property type="entry name" value="Phosphoglycerate kinase"/>
    <property type="match status" value="1"/>
</dbReference>
<dbReference type="PROSITE" id="PS00111">
    <property type="entry name" value="PGLYCERATE_KINASE"/>
    <property type="match status" value="1"/>
</dbReference>
<organism>
    <name type="scientific">Staphylococcus aureus (strain Mu3 / ATCC 700698)</name>
    <dbReference type="NCBI Taxonomy" id="418127"/>
    <lineage>
        <taxon>Bacteria</taxon>
        <taxon>Bacillati</taxon>
        <taxon>Bacillota</taxon>
        <taxon>Bacilli</taxon>
        <taxon>Bacillales</taxon>
        <taxon>Staphylococcaceae</taxon>
        <taxon>Staphylococcus</taxon>
    </lineage>
</organism>
<protein>
    <recommendedName>
        <fullName evidence="1">Phosphoglycerate kinase</fullName>
        <ecNumber evidence="1">2.7.2.3</ecNumber>
    </recommendedName>
</protein>
<name>PGK_STAA1</name>
<feature type="chain" id="PRO_1000009647" description="Phosphoglycerate kinase">
    <location>
        <begin position="1"/>
        <end position="396"/>
    </location>
</feature>
<feature type="binding site" evidence="1">
    <location>
        <begin position="21"/>
        <end position="23"/>
    </location>
    <ligand>
        <name>substrate</name>
    </ligand>
</feature>
<feature type="binding site" evidence="1">
    <location>
        <position position="36"/>
    </location>
    <ligand>
        <name>substrate</name>
    </ligand>
</feature>
<feature type="binding site" evidence="1">
    <location>
        <begin position="59"/>
        <end position="62"/>
    </location>
    <ligand>
        <name>substrate</name>
    </ligand>
</feature>
<feature type="binding site" evidence="1">
    <location>
        <position position="119"/>
    </location>
    <ligand>
        <name>substrate</name>
    </ligand>
</feature>
<feature type="binding site" evidence="1">
    <location>
        <position position="156"/>
    </location>
    <ligand>
        <name>substrate</name>
    </ligand>
</feature>
<feature type="binding site" evidence="1">
    <location>
        <position position="206"/>
    </location>
    <ligand>
        <name>ATP</name>
        <dbReference type="ChEBI" id="CHEBI:30616"/>
    </ligand>
</feature>
<feature type="binding site" evidence="1">
    <location>
        <position position="294"/>
    </location>
    <ligand>
        <name>ATP</name>
        <dbReference type="ChEBI" id="CHEBI:30616"/>
    </ligand>
</feature>
<feature type="binding site" evidence="1">
    <location>
        <position position="325"/>
    </location>
    <ligand>
        <name>ATP</name>
        <dbReference type="ChEBI" id="CHEBI:30616"/>
    </ligand>
</feature>
<feature type="binding site" evidence="1">
    <location>
        <begin position="352"/>
        <end position="355"/>
    </location>
    <ligand>
        <name>ATP</name>
        <dbReference type="ChEBI" id="CHEBI:30616"/>
    </ligand>
</feature>
<keyword id="KW-0067">ATP-binding</keyword>
<keyword id="KW-0963">Cytoplasm</keyword>
<keyword id="KW-0324">Glycolysis</keyword>
<keyword id="KW-0418">Kinase</keyword>
<keyword id="KW-0547">Nucleotide-binding</keyword>
<keyword id="KW-0808">Transferase</keyword>
<sequence length="396" mass="42602">MAKKIVSDLDLKGKTVLVRADFNVPLKDGEITNDNRIVQALPTIQYIIEQGGKIVLFSHLGKVKEESDKAKLTLRPVAEDLSKKLDKEVVFVPETRGEKLEAAIKDLKEGDVLLVENTRYEDLDGKKESKNDPELGKYWASLGDVFVNDAFGTAHREHASNVGISTHLETAAGFLMDKEIKFIGGVVNDPHKPVVAILGGAKVSDKINVIKNLVNIADKIIIGGGMAYTFLKAQGKEIGISLLEEDKIDFAKDLLEKHGDKIVLPVDTKVAKEFSNDAKITVVPSDSIPADQEGMDIGPNTVKLFADELEGAHTVVWNGPMGVFEFSNFAQGTIGVCKAIANLKDAITIIGGGDSAAAAISLGFENDFTHISTGGGASLEYLEGKELPGIKAINNK</sequence>
<evidence type="ECO:0000255" key="1">
    <source>
        <dbReference type="HAMAP-Rule" id="MF_00145"/>
    </source>
</evidence>